<organismHost>
    <name type="scientific">Acidianus hospitalis</name>
    <dbReference type="NCBI Taxonomy" id="563177"/>
</organismHost>
<organismHost>
    <name type="scientific">Acidianus infernus</name>
    <dbReference type="NCBI Taxonomy" id="12915"/>
</organismHost>
<name>Y190_AFV1Y</name>
<feature type="chain" id="PRO_0000384564" description="Uncharacterized protein ORF190">
    <location>
        <begin position="1"/>
        <end position="190"/>
    </location>
</feature>
<reference key="1">
    <citation type="journal article" date="2003" name="Virology">
        <title>AFV1, a novel virus infecting hyperthermophilic archaea of the genus acidianus.</title>
        <authorList>
            <person name="Bettstetter M."/>
            <person name="Peng X."/>
            <person name="Garrett R.A."/>
            <person name="Prangishvili D."/>
        </authorList>
    </citation>
    <scope>NUCLEOTIDE SEQUENCE [GENOMIC DNA]</scope>
</reference>
<proteinExistence type="predicted"/>
<protein>
    <recommendedName>
        <fullName>Uncharacterized protein ORF190</fullName>
    </recommendedName>
</protein>
<organism>
    <name type="scientific">Acidianus filamentous virus 1 (isolate United States/Yellowstone)</name>
    <name type="common">AFV-1</name>
    <dbReference type="NCBI Taxonomy" id="654909"/>
    <lineage>
        <taxon>Viruses</taxon>
        <taxon>Adnaviria</taxon>
        <taxon>Zilligvirae</taxon>
        <taxon>Taleaviricota</taxon>
        <taxon>Tokiviricetes</taxon>
        <taxon>Ligamenvirales</taxon>
        <taxon>Ungulaviridae</taxon>
        <taxon>Captovirus</taxon>
        <taxon>Acidianus filamentous virus 1</taxon>
    </lineage>
</organism>
<sequence length="190" mass="22157">MEKKVDKNEFLNMVLLKLEEGKVFLGKHGLKINISLDNVRINSGSVSITVGDIYLKVDMRNSELVLNDLENHEVYIYSYANDEVKIRITQNTFYLYMQIDELKPVTQEVMLRAIEALRIPFSKREGLRIDIDLTQYHEIEYTSEDGLQLRYGVDDIQIKDDKLVMNGLAIDILNNDWFISFEKNVMSMIL</sequence>
<accession>Q70LE9</accession>
<keyword id="KW-1185">Reference proteome</keyword>
<gene>
    <name type="ORF">ORF190</name>
</gene>
<dbReference type="EMBL" id="AJ567472">
    <property type="protein sequence ID" value="CAD98931.1"/>
    <property type="molecule type" value="Genomic_DNA"/>
</dbReference>
<dbReference type="RefSeq" id="YP_003727.1">
    <property type="nucleotide sequence ID" value="NC_005830.1"/>
</dbReference>
<dbReference type="KEGG" id="vg:2769195"/>
<dbReference type="Proteomes" id="UP000000514">
    <property type="component" value="Genome"/>
</dbReference>